<protein>
    <recommendedName>
        <fullName>Translocation protein SEC62</fullName>
    </recommendedName>
    <alternativeName>
        <fullName>Translocation protein 1</fullName>
        <shortName>TP-1</shortName>
        <shortName>hTP-1</shortName>
    </alternativeName>
</protein>
<sequence length="399" mass="45862">MAERRRHKKRIQEVGEPSKEEKAVAKYLRFNCPTKSTNMMGHRVDYFIASKAVDCLLDSKWAKAKKGEEALFTTRESVVDYCNRLLKKQFFHRALKVMKMKYDKDIKKEKDKGKAESGKEEDKKSKKENIKDEKTKKEKEKKKDGEKEESKKEETPGTPKKKETKKKFKLEPHDDQVFLDGNEVYVWIYDPVHFKTFVMGLILVIAVIAATLFPLWPAEMRVGVYYLSVGAGCFVASILLLAVARCILFLIIWLITGGRHHFWFLPNLTADVGFIDSFRPLYTHEYKGPKADLKKDEKSETKKQQKSDSEEKSDSEKKEDEEGKVGPGNHGTEGSGGERHSDTDSDRREDDRSQHSSGNGNDFEMITKEELEQQTDGDCEEDEEEENDGETPKSSHEKS</sequence>
<comment type="function">
    <text evidence="5 6">Mediates post-translational transport of precursor polypeptides across endoplasmic reticulum (ER). Proposed to act as a targeting receptor for small presecretory proteins containing short and apolar signal peptides. Targets and properly positions newly synthesized presecretory proteins into the SEC61 channel-forming translocon complex, triggering channel opening for polypeptide translocation to the ER lumen.</text>
</comment>
<comment type="subunit">
    <text evidence="2">The ER translocon complex that consists of channel-forming core components SEC61A1, SEC61B and SEC61G and different auxiliary components such as SEC62 and SEC63. Interacts with SEC61B.</text>
</comment>
<comment type="interaction">
    <interactant intactId="EBI-949221">
        <id>Q99442</id>
    </interactant>
    <interactant intactId="EBI-712001">
        <id>O95166</id>
        <label>GABARAP</label>
    </interactant>
    <organismsDiffer>false</organismsDiffer>
    <experiments>3</experiments>
</comment>
<comment type="subcellular location">
    <subcellularLocation>
        <location evidence="1">Endoplasmic reticulum membrane</location>
        <topology evidence="1">Multi-pass membrane protein</topology>
    </subcellularLocation>
</comment>
<comment type="similarity">
    <text evidence="7">Belongs to the SEC62 family.</text>
</comment>
<name>SEC62_HUMAN</name>
<evidence type="ECO:0000250" key="1"/>
<evidence type="ECO:0000250" key="2">
    <source>
        <dbReference type="UniProtKB" id="P82009"/>
    </source>
</evidence>
<evidence type="ECO:0000255" key="3"/>
<evidence type="ECO:0000256" key="4">
    <source>
        <dbReference type="SAM" id="MobiDB-lite"/>
    </source>
</evidence>
<evidence type="ECO:0000269" key="5">
    <source>
    </source>
</evidence>
<evidence type="ECO:0000269" key="6">
    <source>
    </source>
</evidence>
<evidence type="ECO:0000305" key="7"/>
<evidence type="ECO:0007744" key="8">
    <source>
        <dbReference type="PDB" id="7BRT"/>
    </source>
</evidence>
<evidence type="ECO:0007744" key="9">
    <source>
    </source>
</evidence>
<evidence type="ECO:0007744" key="10">
    <source>
    </source>
</evidence>
<evidence type="ECO:0007744" key="11">
    <source>
    </source>
</evidence>
<evidence type="ECO:0007744" key="12">
    <source>
    </source>
</evidence>
<evidence type="ECO:0007744" key="13">
    <source>
    </source>
</evidence>
<evidence type="ECO:0007744" key="14">
    <source>
    </source>
</evidence>
<evidence type="ECO:0007829" key="15">
    <source>
        <dbReference type="PDB" id="7BRT"/>
    </source>
</evidence>
<reference key="1">
    <citation type="journal article" date="1997" name="Biochem. Biophys. Res. Commun.">
        <title>Identification of a human cDNA homologue to the Drosophila translocation protein 1 (Dtrp-1).</title>
        <authorList>
            <person name="Daimon M."/>
            <person name="Susa S."/>
            <person name="Suzuki K."/>
            <person name="Kato T."/>
            <person name="Yamatani K."/>
            <person name="Sasaki H."/>
        </authorList>
    </citation>
    <scope>NUCLEOTIDE SEQUENCE [MRNA]</scope>
</reference>
<reference key="2">
    <citation type="journal article" date="1999" name="IUBMB Life">
        <title>Fine structure of the human translocation protein 1 (HTP1/TLOC1) gene.</title>
        <authorList>
            <person name="Daimon M."/>
            <person name="Susa S."/>
            <person name="Kato T."/>
        </authorList>
    </citation>
    <scope>NUCLEOTIDE SEQUENCE [GENOMIC DNA]</scope>
</reference>
<reference key="3">
    <citation type="journal article" date="2000" name="J. Biol. Chem.">
        <title>Mammalian Sec61 is associated with Sec62 and Sec63.</title>
        <authorList>
            <person name="Meyer H.-A."/>
            <person name="Grau H."/>
            <person name="Kraft R."/>
            <person name="Kostka S."/>
            <person name="Prehn S."/>
            <person name="Kalies K.-U."/>
            <person name="Hartmann E."/>
        </authorList>
    </citation>
    <scope>NUCLEOTIDE SEQUENCE [MRNA]</scope>
</reference>
<reference key="4">
    <citation type="submission" date="2005-09" db="EMBL/GenBank/DDBJ databases">
        <authorList>
            <person name="Mural R.J."/>
            <person name="Istrail S."/>
            <person name="Sutton G.G."/>
            <person name="Florea L."/>
            <person name="Halpern A.L."/>
            <person name="Mobarry C.M."/>
            <person name="Lippert R."/>
            <person name="Walenz B."/>
            <person name="Shatkay H."/>
            <person name="Dew I."/>
            <person name="Miller J.R."/>
            <person name="Flanigan M.J."/>
            <person name="Edwards N.J."/>
            <person name="Bolanos R."/>
            <person name="Fasulo D."/>
            <person name="Halldorsson B.V."/>
            <person name="Hannenhalli S."/>
            <person name="Turner R."/>
            <person name="Yooseph S."/>
            <person name="Lu F."/>
            <person name="Nusskern D.R."/>
            <person name="Shue B.C."/>
            <person name="Zheng X.H."/>
            <person name="Zhong F."/>
            <person name="Delcher A.L."/>
            <person name="Huson D.H."/>
            <person name="Kravitz S.A."/>
            <person name="Mouchard L."/>
            <person name="Reinert K."/>
            <person name="Remington K.A."/>
            <person name="Clark A.G."/>
            <person name="Waterman M.S."/>
            <person name="Eichler E.E."/>
            <person name="Adams M.D."/>
            <person name="Hunkapiller M.W."/>
            <person name="Myers E.W."/>
            <person name="Venter J.C."/>
        </authorList>
    </citation>
    <scope>NUCLEOTIDE SEQUENCE [LARGE SCALE GENOMIC DNA]</scope>
</reference>
<reference key="5">
    <citation type="journal article" date="2004" name="Genome Res.">
        <title>The status, quality, and expansion of the NIH full-length cDNA project: the Mammalian Gene Collection (MGC).</title>
        <authorList>
            <consortium name="The MGC Project Team"/>
        </authorList>
    </citation>
    <scope>NUCLEOTIDE SEQUENCE [LARGE SCALE MRNA]</scope>
    <source>
        <tissue>Mammary gland</tissue>
    </source>
</reference>
<reference key="6">
    <citation type="journal article" date="2006" name="Cell">
        <title>Global, in vivo, and site-specific phosphorylation dynamics in signaling networks.</title>
        <authorList>
            <person name="Olsen J.V."/>
            <person name="Blagoev B."/>
            <person name="Gnad F."/>
            <person name="Macek B."/>
            <person name="Kumar C."/>
            <person name="Mortensen P."/>
            <person name="Mann M."/>
        </authorList>
    </citation>
    <scope>PHOSPHORYLATION [LARGE SCALE ANALYSIS] AT THR-158</scope>
    <scope>IDENTIFICATION BY MASS SPECTROMETRY [LARGE SCALE ANALYSIS]</scope>
    <source>
        <tissue>Cervix carcinoma</tissue>
    </source>
</reference>
<reference key="7">
    <citation type="journal article" date="2008" name="Proteomics">
        <title>Large-scale phosphoproteome analysis of human liver tissue by enrichment and fractionation of phosphopeptides with strong anion exchange chromatography.</title>
        <authorList>
            <person name="Han G."/>
            <person name="Ye M."/>
            <person name="Zhou H."/>
            <person name="Jiang X."/>
            <person name="Feng S."/>
            <person name="Jiang X."/>
            <person name="Tian R."/>
            <person name="Wan D."/>
            <person name="Zou H."/>
            <person name="Gu J."/>
        </authorList>
    </citation>
    <scope>PHOSPHORYLATION [LARGE SCALE ANALYSIS] AT THR-375</scope>
    <scope>IDENTIFICATION BY MASS SPECTROMETRY [LARGE SCALE ANALYSIS]</scope>
    <source>
        <tissue>Liver</tissue>
    </source>
</reference>
<reference key="8">
    <citation type="journal article" date="2010" name="Sci. Signal.">
        <title>Quantitative phosphoproteomics reveals widespread full phosphorylation site occupancy during mitosis.</title>
        <authorList>
            <person name="Olsen J.V."/>
            <person name="Vermeulen M."/>
            <person name="Santamaria A."/>
            <person name="Kumar C."/>
            <person name="Miller M.L."/>
            <person name="Jensen L.J."/>
            <person name="Gnad F."/>
            <person name="Cox J."/>
            <person name="Jensen T.S."/>
            <person name="Nigg E.A."/>
            <person name="Brunak S."/>
            <person name="Mann M."/>
        </authorList>
    </citation>
    <scope>PHOSPHORYLATION [LARGE SCALE ANALYSIS] AT THR-158</scope>
    <scope>IDENTIFICATION BY MASS SPECTROMETRY [LARGE SCALE ANALYSIS]</scope>
    <source>
        <tissue>Cervix carcinoma</tissue>
    </source>
</reference>
<reference key="9">
    <citation type="journal article" date="2011" name="BMC Syst. Biol.">
        <title>Initial characterization of the human central proteome.</title>
        <authorList>
            <person name="Burkard T.R."/>
            <person name="Planyavsky M."/>
            <person name="Kaupe I."/>
            <person name="Breitwieser F.P."/>
            <person name="Buerckstuemmer T."/>
            <person name="Bennett K.L."/>
            <person name="Superti-Furga G."/>
            <person name="Colinge J."/>
        </authorList>
    </citation>
    <scope>IDENTIFICATION BY MASS SPECTROMETRY [LARGE SCALE ANALYSIS]</scope>
</reference>
<reference key="10">
    <citation type="journal article" date="2011" name="Sci. Signal.">
        <title>System-wide temporal characterization of the proteome and phosphoproteome of human embryonic stem cell differentiation.</title>
        <authorList>
            <person name="Rigbolt K.T."/>
            <person name="Prokhorova T.A."/>
            <person name="Akimov V."/>
            <person name="Henningsen J."/>
            <person name="Johansen P.T."/>
            <person name="Kratchmarova I."/>
            <person name="Kassem M."/>
            <person name="Mann M."/>
            <person name="Olsen J.V."/>
            <person name="Blagoev B."/>
        </authorList>
    </citation>
    <scope>PHOSPHORYLATION [LARGE SCALE ANALYSIS] AT SER-353 AND SER-356</scope>
    <scope>IDENTIFICATION BY MASS SPECTROMETRY [LARGE SCALE ANALYSIS]</scope>
</reference>
<reference key="11">
    <citation type="journal article" date="2012" name="J. Cell Sci.">
        <title>Different effects of Sec61alpha, Sec62 and Sec63 depletion on transport of polypeptides into the endoplasmic reticulum of mammalian cells.</title>
        <authorList>
            <person name="Lang S."/>
            <person name="Benedix J."/>
            <person name="Fedeles S.V."/>
            <person name="Schorr S."/>
            <person name="Schirra C."/>
            <person name="Schaeuble N."/>
            <person name="Jalal C."/>
            <person name="Greiner M."/>
            <person name="Hassdenteufel S."/>
            <person name="Tatzelt J."/>
            <person name="Kreutzer B."/>
            <person name="Edelmann L."/>
            <person name="Krause E."/>
            <person name="Rettig J."/>
            <person name="Somlo S."/>
            <person name="Zimmermann R."/>
            <person name="Dudek J."/>
        </authorList>
    </citation>
    <scope>FUNCTION</scope>
</reference>
<reference key="12">
    <citation type="journal article" date="2013" name="J. Proteome Res.">
        <title>Toward a comprehensive characterization of a human cancer cell phosphoproteome.</title>
        <authorList>
            <person name="Zhou H."/>
            <person name="Di Palma S."/>
            <person name="Preisinger C."/>
            <person name="Peng M."/>
            <person name="Polat A.N."/>
            <person name="Heck A.J."/>
            <person name="Mohammed S."/>
        </authorList>
    </citation>
    <scope>PHOSPHORYLATION [LARGE SCALE ANALYSIS] AT SER-341; SER-356 AND THR-375</scope>
    <scope>IDENTIFICATION BY MASS SPECTROMETRY [LARGE SCALE ANALYSIS]</scope>
    <source>
        <tissue>Cervix carcinoma</tissue>
        <tissue>Erythroleukemia</tissue>
    </source>
</reference>
<reference key="13">
    <citation type="journal article" date="2014" name="J. Proteomics">
        <title>An enzyme assisted RP-RPLC approach for in-depth analysis of human liver phosphoproteome.</title>
        <authorList>
            <person name="Bian Y."/>
            <person name="Song C."/>
            <person name="Cheng K."/>
            <person name="Dong M."/>
            <person name="Wang F."/>
            <person name="Huang J."/>
            <person name="Sun D."/>
            <person name="Wang L."/>
            <person name="Ye M."/>
            <person name="Zou H."/>
        </authorList>
    </citation>
    <scope>PHOSPHORYLATION [LARGE SCALE ANALYSIS] AT SER-335</scope>
    <scope>IDENTIFICATION BY MASS SPECTROMETRY [LARGE SCALE ANALYSIS]</scope>
    <source>
        <tissue>Liver</tissue>
    </source>
</reference>
<reference key="14">
    <citation type="journal article" date="2015" name="Proteomics">
        <title>N-terminome analysis of the human mitochondrial proteome.</title>
        <authorList>
            <person name="Vaca Jacome A.S."/>
            <person name="Rabilloud T."/>
            <person name="Schaeffer-Reiss C."/>
            <person name="Rompais M."/>
            <person name="Ayoub D."/>
            <person name="Lane L."/>
            <person name="Bairoch A."/>
            <person name="Van Dorsselaer A."/>
            <person name="Carapito C."/>
        </authorList>
    </citation>
    <scope>IDENTIFICATION BY MASS SPECTROMETRY [LARGE SCALE ANALYSIS]</scope>
</reference>
<reference key="15">
    <citation type="journal article" date="2018" name="Cell Rep.">
        <title>Chaperone-Mediated Sec61 Channel Gating during ER Import of Small Precursor Proteins Overcomes Sec61 Inhibitor-Reinforced Energy Barrier.</title>
        <authorList>
            <person name="Hassdenteufel S."/>
            <person name="Johnson N."/>
            <person name="Paton A.W."/>
            <person name="Paton J.C."/>
            <person name="High S."/>
            <person name="Zimmermann R."/>
        </authorList>
    </citation>
    <scope>FUNCTION</scope>
</reference>
<reference evidence="8" key="16">
    <citation type="journal article" date="2020" name="Nat. Commun.">
        <title>Super-assembly of ER-phagy receptor Atg40 induces local ER remodeling at contacts with forming autophagosomal membranes.</title>
        <authorList>
            <person name="Mochida K."/>
            <person name="Yamasaki A."/>
            <person name="Matoba K."/>
            <person name="Kirisako H."/>
            <person name="Noda N.N."/>
            <person name="Nakatogawa H."/>
        </authorList>
    </citation>
    <scope>X-RAY CRYSTALLOGRAPHY (2.00 ANGSTROMS) OF 361-376 IN CHIMERIC CONSTRUCT WITH GABARAP</scope>
</reference>
<proteinExistence type="evidence at protein level"/>
<feature type="chain" id="PRO_0000206616" description="Translocation protein SEC62">
    <location>
        <begin position="1"/>
        <end position="399"/>
    </location>
</feature>
<feature type="topological domain" description="Cytoplasmic" evidence="3">
    <location>
        <begin position="1"/>
        <end position="196"/>
    </location>
</feature>
<feature type="transmembrane region" description="Helical" evidence="3">
    <location>
        <begin position="197"/>
        <end position="217"/>
    </location>
</feature>
<feature type="topological domain" description="Lumenal" evidence="3">
    <location>
        <begin position="218"/>
        <end position="234"/>
    </location>
</feature>
<feature type="transmembrane region" description="Helical" evidence="3">
    <location>
        <begin position="235"/>
        <end position="255"/>
    </location>
</feature>
<feature type="topological domain" description="Cytoplasmic" evidence="3">
    <location>
        <begin position="256"/>
        <end position="399"/>
    </location>
</feature>
<feature type="region of interest" description="Disordered" evidence="4">
    <location>
        <begin position="108"/>
        <end position="167"/>
    </location>
</feature>
<feature type="region of interest" description="Disordered" evidence="4">
    <location>
        <begin position="289"/>
        <end position="399"/>
    </location>
</feature>
<feature type="compositionally biased region" description="Basic and acidic residues" evidence="4">
    <location>
        <begin position="108"/>
        <end position="155"/>
    </location>
</feature>
<feature type="compositionally biased region" description="Basic and acidic residues" evidence="4">
    <location>
        <begin position="289"/>
        <end position="324"/>
    </location>
</feature>
<feature type="compositionally biased region" description="Gly residues" evidence="4">
    <location>
        <begin position="325"/>
        <end position="335"/>
    </location>
</feature>
<feature type="compositionally biased region" description="Basic and acidic residues" evidence="4">
    <location>
        <begin position="336"/>
        <end position="354"/>
    </location>
</feature>
<feature type="compositionally biased region" description="Acidic residues" evidence="4">
    <location>
        <begin position="372"/>
        <end position="389"/>
    </location>
</feature>
<feature type="compositionally biased region" description="Basic and acidic residues" evidence="4">
    <location>
        <begin position="390"/>
        <end position="399"/>
    </location>
</feature>
<feature type="modified residue" description="Phosphothreonine" evidence="9 11">
    <location>
        <position position="158"/>
    </location>
</feature>
<feature type="modified residue" description="Phosphoserine" evidence="14">
    <location>
        <position position="335"/>
    </location>
</feature>
<feature type="modified residue" description="Phosphoserine" evidence="13">
    <location>
        <position position="341"/>
    </location>
</feature>
<feature type="modified residue" description="Phosphoserine" evidence="12">
    <location>
        <position position="353"/>
    </location>
</feature>
<feature type="modified residue" description="Phosphoserine" evidence="12 13">
    <location>
        <position position="356"/>
    </location>
</feature>
<feature type="modified residue" description="Phosphothreonine" evidence="10 13">
    <location>
        <position position="375"/>
    </location>
</feature>
<feature type="helix" evidence="15">
    <location>
        <begin position="368"/>
        <end position="375"/>
    </location>
</feature>
<accession>Q99442</accession>
<accession>D3DNQ0</accession>
<accession>O00682</accession>
<accession>O00729</accession>
<keyword id="KW-0002">3D-structure</keyword>
<keyword id="KW-0256">Endoplasmic reticulum</keyword>
<keyword id="KW-0472">Membrane</keyword>
<keyword id="KW-0597">Phosphoprotein</keyword>
<keyword id="KW-0653">Protein transport</keyword>
<keyword id="KW-1267">Proteomics identification</keyword>
<keyword id="KW-1185">Reference proteome</keyword>
<keyword id="KW-0811">Translocation</keyword>
<keyword id="KW-0812">Transmembrane</keyword>
<keyword id="KW-1133">Transmembrane helix</keyword>
<keyword id="KW-0813">Transport</keyword>
<dbReference type="EMBL" id="D87127">
    <property type="protein sequence ID" value="BAA13254.1"/>
    <property type="molecule type" value="mRNA"/>
</dbReference>
<dbReference type="EMBL" id="AB024586">
    <property type="protein sequence ID" value="BAB12685.1"/>
    <property type="molecule type" value="Genomic_DNA"/>
</dbReference>
<dbReference type="EMBL" id="U93239">
    <property type="protein sequence ID" value="AAB51391.1"/>
    <property type="molecule type" value="mRNA"/>
</dbReference>
<dbReference type="EMBL" id="CH471052">
    <property type="protein sequence ID" value="EAW78530.1"/>
    <property type="molecule type" value="Genomic_DNA"/>
</dbReference>
<dbReference type="EMBL" id="CH471052">
    <property type="protein sequence ID" value="EAW78531.1"/>
    <property type="molecule type" value="Genomic_DNA"/>
</dbReference>
<dbReference type="EMBL" id="BC012035">
    <property type="protein sequence ID" value="AAH12035.1"/>
    <property type="molecule type" value="mRNA"/>
</dbReference>
<dbReference type="CCDS" id="CCDS3210.1"/>
<dbReference type="PIR" id="JC5279">
    <property type="entry name" value="JC5279"/>
</dbReference>
<dbReference type="RefSeq" id="NP_003253.1">
    <property type="nucleotide sequence ID" value="NM_003262.4"/>
</dbReference>
<dbReference type="PDB" id="7BRT">
    <property type="method" value="X-ray"/>
    <property type="resolution" value="2.00 A"/>
    <property type="chains" value="A/B=361-376"/>
</dbReference>
<dbReference type="PDBsum" id="7BRT"/>
<dbReference type="SMR" id="Q99442"/>
<dbReference type="BioGRID" id="112950">
    <property type="interactions" value="517"/>
</dbReference>
<dbReference type="FunCoup" id="Q99442">
    <property type="interactions" value="2695"/>
</dbReference>
<dbReference type="IntAct" id="Q99442">
    <property type="interactions" value="123"/>
</dbReference>
<dbReference type="MINT" id="Q99442"/>
<dbReference type="STRING" id="9606.ENSP00000337688"/>
<dbReference type="TCDB" id="1.A.15.1.6">
    <property type="family name" value="the non-selective cation channel-2 (nscc2) family"/>
</dbReference>
<dbReference type="GlyGen" id="Q99442">
    <property type="glycosylation" value="1 site, 1 O-linked glycan (1 site)"/>
</dbReference>
<dbReference type="iPTMnet" id="Q99442"/>
<dbReference type="PhosphoSitePlus" id="Q99442"/>
<dbReference type="SwissPalm" id="Q99442"/>
<dbReference type="BioMuta" id="SEC62"/>
<dbReference type="DMDM" id="74732781"/>
<dbReference type="jPOST" id="Q99442"/>
<dbReference type="MassIVE" id="Q99442"/>
<dbReference type="PaxDb" id="9606-ENSP00000337688"/>
<dbReference type="PeptideAtlas" id="Q99442"/>
<dbReference type="ProteomicsDB" id="78271"/>
<dbReference type="Pumba" id="Q99442"/>
<dbReference type="TopDownProteomics" id="Q99442"/>
<dbReference type="Antibodypedia" id="2978">
    <property type="antibodies" value="130 antibodies from 28 providers"/>
</dbReference>
<dbReference type="DNASU" id="7095"/>
<dbReference type="Ensembl" id="ENST00000337002.9">
    <property type="protein sequence ID" value="ENSP00000337688.4"/>
    <property type="gene ID" value="ENSG00000008952.17"/>
</dbReference>
<dbReference type="Ensembl" id="ENST00000480708.5">
    <property type="protein sequence ID" value="ENSP00000420331.1"/>
    <property type="gene ID" value="ENSG00000008952.17"/>
</dbReference>
<dbReference type="GeneID" id="7095"/>
<dbReference type="KEGG" id="hsa:7095"/>
<dbReference type="MANE-Select" id="ENST00000337002.9">
    <property type="protein sequence ID" value="ENSP00000337688.4"/>
    <property type="RefSeq nucleotide sequence ID" value="NM_003262.4"/>
    <property type="RefSeq protein sequence ID" value="NP_003253.1"/>
</dbReference>
<dbReference type="UCSC" id="uc003fgg.4">
    <property type="organism name" value="human"/>
</dbReference>
<dbReference type="AGR" id="HGNC:11846"/>
<dbReference type="CTD" id="7095"/>
<dbReference type="DisGeNET" id="7095"/>
<dbReference type="GeneCards" id="SEC62"/>
<dbReference type="HGNC" id="HGNC:11846">
    <property type="gene designation" value="SEC62"/>
</dbReference>
<dbReference type="HPA" id="ENSG00000008952">
    <property type="expression patterns" value="Low tissue specificity"/>
</dbReference>
<dbReference type="MIM" id="602173">
    <property type="type" value="gene"/>
</dbReference>
<dbReference type="neXtProt" id="NX_Q99442"/>
<dbReference type="OpenTargets" id="ENSG00000008952"/>
<dbReference type="PharmGKB" id="PA162402849"/>
<dbReference type="VEuPathDB" id="HostDB:ENSG00000008952"/>
<dbReference type="eggNOG" id="KOG2927">
    <property type="taxonomic scope" value="Eukaryota"/>
</dbReference>
<dbReference type="GeneTree" id="ENSGT00390000002757"/>
<dbReference type="HOGENOM" id="CLU_051910_0_0_1"/>
<dbReference type="InParanoid" id="Q99442"/>
<dbReference type="OMA" id="CLLESPW"/>
<dbReference type="OrthoDB" id="200187at2759"/>
<dbReference type="PAN-GO" id="Q99442">
    <property type="GO annotations" value="3 GO annotations based on evolutionary models"/>
</dbReference>
<dbReference type="PhylomeDB" id="Q99442"/>
<dbReference type="TreeFam" id="TF314944"/>
<dbReference type="PathwayCommons" id="Q99442"/>
<dbReference type="SignaLink" id="Q99442"/>
<dbReference type="SIGNOR" id="Q99442"/>
<dbReference type="BioGRID-ORCS" id="7095">
    <property type="hits" value="259 hits in 1165 CRISPR screens"/>
</dbReference>
<dbReference type="ChiTaRS" id="SEC62">
    <property type="organism name" value="human"/>
</dbReference>
<dbReference type="GeneWiki" id="SEC62"/>
<dbReference type="GenomeRNAi" id="7095"/>
<dbReference type="Pharos" id="Q99442">
    <property type="development level" value="Tbio"/>
</dbReference>
<dbReference type="PRO" id="PR:Q99442"/>
<dbReference type="Proteomes" id="UP000005640">
    <property type="component" value="Chromosome 3"/>
</dbReference>
<dbReference type="RNAct" id="Q99442">
    <property type="molecule type" value="protein"/>
</dbReference>
<dbReference type="Bgee" id="ENSG00000008952">
    <property type="expression patterns" value="Expressed in endothelial cell and 218 other cell types or tissues"/>
</dbReference>
<dbReference type="ExpressionAtlas" id="Q99442">
    <property type="expression patterns" value="baseline and differential"/>
</dbReference>
<dbReference type="GO" id="GO:0005783">
    <property type="term" value="C:endoplasmic reticulum"/>
    <property type="evidence" value="ECO:0000318"/>
    <property type="project" value="GO_Central"/>
</dbReference>
<dbReference type="GO" id="GO:0005789">
    <property type="term" value="C:endoplasmic reticulum membrane"/>
    <property type="evidence" value="ECO:0007669"/>
    <property type="project" value="UniProtKB-SubCell"/>
</dbReference>
<dbReference type="GO" id="GO:0016020">
    <property type="term" value="C:membrane"/>
    <property type="evidence" value="ECO:0000314"/>
    <property type="project" value="MGI"/>
</dbReference>
<dbReference type="GO" id="GO:0005791">
    <property type="term" value="C:rough endoplasmic reticulum"/>
    <property type="evidence" value="ECO:0000250"/>
    <property type="project" value="UniProtKB"/>
</dbReference>
<dbReference type="GO" id="GO:0038023">
    <property type="term" value="F:signaling receptor activity"/>
    <property type="evidence" value="ECO:0000304"/>
    <property type="project" value="ProtInc"/>
</dbReference>
<dbReference type="GO" id="GO:0006613">
    <property type="term" value="P:cotranslational protein targeting to membrane"/>
    <property type="evidence" value="ECO:0000304"/>
    <property type="project" value="ProtInc"/>
</dbReference>
<dbReference type="GO" id="GO:0006620">
    <property type="term" value="P:post-translational protein targeting to endoplasmic reticulum membrane"/>
    <property type="evidence" value="ECO:0000315"/>
    <property type="project" value="MGI"/>
</dbReference>
<dbReference type="GO" id="GO:0031204">
    <property type="term" value="P:post-translational protein targeting to membrane, translocation"/>
    <property type="evidence" value="ECO:0000315"/>
    <property type="project" value="UniProtKB"/>
</dbReference>
<dbReference type="InterPro" id="IPR004728">
    <property type="entry name" value="Sec62"/>
</dbReference>
<dbReference type="PANTHER" id="PTHR12443">
    <property type="entry name" value="TRANSLOCATION PROTEIN SEC62"/>
    <property type="match status" value="1"/>
</dbReference>
<dbReference type="PANTHER" id="PTHR12443:SF9">
    <property type="entry name" value="TRANSLOCATION PROTEIN SEC62"/>
    <property type="match status" value="1"/>
</dbReference>
<dbReference type="Pfam" id="PF03839">
    <property type="entry name" value="Sec62"/>
    <property type="match status" value="1"/>
</dbReference>
<organism>
    <name type="scientific">Homo sapiens</name>
    <name type="common">Human</name>
    <dbReference type="NCBI Taxonomy" id="9606"/>
    <lineage>
        <taxon>Eukaryota</taxon>
        <taxon>Metazoa</taxon>
        <taxon>Chordata</taxon>
        <taxon>Craniata</taxon>
        <taxon>Vertebrata</taxon>
        <taxon>Euteleostomi</taxon>
        <taxon>Mammalia</taxon>
        <taxon>Eutheria</taxon>
        <taxon>Euarchontoglires</taxon>
        <taxon>Primates</taxon>
        <taxon>Haplorrhini</taxon>
        <taxon>Catarrhini</taxon>
        <taxon>Hominidae</taxon>
        <taxon>Homo</taxon>
    </lineage>
</organism>
<gene>
    <name type="primary">SEC62</name>
    <name type="synonym">TLOC1</name>
</gene>